<protein>
    <recommendedName>
        <fullName evidence="1">UPF0391 membrane protein Meso_3392</fullName>
    </recommendedName>
</protein>
<name>Y3392_CHESB</name>
<sequence>MLKWILILLIVAAVAGLLGMHSLAGAAMTGAKILIAIVLILFLLAVLGIIAIA</sequence>
<reference key="1">
    <citation type="submission" date="2006-06" db="EMBL/GenBank/DDBJ databases">
        <title>Complete sequence of chromosome of Mesorhizobium sp. BNC1.</title>
        <authorList>
            <consortium name="US DOE Joint Genome Institute"/>
            <person name="Copeland A."/>
            <person name="Lucas S."/>
            <person name="Lapidus A."/>
            <person name="Barry K."/>
            <person name="Detter J.C."/>
            <person name="Glavina del Rio T."/>
            <person name="Hammon N."/>
            <person name="Israni S."/>
            <person name="Dalin E."/>
            <person name="Tice H."/>
            <person name="Pitluck S."/>
            <person name="Chertkov O."/>
            <person name="Brettin T."/>
            <person name="Bruce D."/>
            <person name="Han C."/>
            <person name="Tapia R."/>
            <person name="Gilna P."/>
            <person name="Schmutz J."/>
            <person name="Larimer F."/>
            <person name="Land M."/>
            <person name="Hauser L."/>
            <person name="Kyrpides N."/>
            <person name="Mikhailova N."/>
            <person name="Richardson P."/>
        </authorList>
    </citation>
    <scope>NUCLEOTIDE SEQUENCE [LARGE SCALE GENOMIC DNA]</scope>
    <source>
        <strain>BNC1</strain>
    </source>
</reference>
<dbReference type="EMBL" id="CP000390">
    <property type="protein sequence ID" value="ABG64763.1"/>
    <property type="molecule type" value="Genomic_DNA"/>
</dbReference>
<dbReference type="STRING" id="266779.Meso_3392"/>
<dbReference type="KEGG" id="mes:Meso_3392"/>
<dbReference type="eggNOG" id="ENOG5033EG9">
    <property type="taxonomic scope" value="Bacteria"/>
</dbReference>
<dbReference type="HOGENOM" id="CLU_187346_4_0_5"/>
<dbReference type="GO" id="GO:0005886">
    <property type="term" value="C:plasma membrane"/>
    <property type="evidence" value="ECO:0007669"/>
    <property type="project" value="UniProtKB-SubCell"/>
</dbReference>
<dbReference type="HAMAP" id="MF_01361">
    <property type="entry name" value="UPF0391"/>
    <property type="match status" value="1"/>
</dbReference>
<dbReference type="InterPro" id="IPR009760">
    <property type="entry name" value="DUF1328"/>
</dbReference>
<dbReference type="Pfam" id="PF07043">
    <property type="entry name" value="DUF1328"/>
    <property type="match status" value="1"/>
</dbReference>
<dbReference type="PIRSF" id="PIRSF036466">
    <property type="entry name" value="UCP036466"/>
    <property type="match status" value="1"/>
</dbReference>
<keyword id="KW-1003">Cell membrane</keyword>
<keyword id="KW-0472">Membrane</keyword>
<keyword id="KW-0812">Transmembrane</keyword>
<keyword id="KW-1133">Transmembrane helix</keyword>
<evidence type="ECO:0000255" key="1">
    <source>
        <dbReference type="HAMAP-Rule" id="MF_01361"/>
    </source>
</evidence>
<gene>
    <name type="ordered locus">Meso_3392</name>
</gene>
<feature type="chain" id="PRO_0000256748" description="UPF0391 membrane protein Meso_3392">
    <location>
        <begin position="1"/>
        <end position="53"/>
    </location>
</feature>
<feature type="transmembrane region" description="Helical" evidence="1">
    <location>
        <begin position="4"/>
        <end position="24"/>
    </location>
</feature>
<feature type="transmembrane region" description="Helical" evidence="1">
    <location>
        <begin position="33"/>
        <end position="53"/>
    </location>
</feature>
<comment type="subcellular location">
    <subcellularLocation>
        <location evidence="1">Cell membrane</location>
        <topology evidence="1">Multi-pass membrane protein</topology>
    </subcellularLocation>
</comment>
<comment type="similarity">
    <text evidence="1">Belongs to the UPF0391 family.</text>
</comment>
<proteinExistence type="inferred from homology"/>
<accession>Q11CW2</accession>
<organism>
    <name type="scientific">Chelativorans sp. (strain BNC1)</name>
    <dbReference type="NCBI Taxonomy" id="266779"/>
    <lineage>
        <taxon>Bacteria</taxon>
        <taxon>Pseudomonadati</taxon>
        <taxon>Pseudomonadota</taxon>
        <taxon>Alphaproteobacteria</taxon>
        <taxon>Hyphomicrobiales</taxon>
        <taxon>Phyllobacteriaceae</taxon>
        <taxon>Chelativorans</taxon>
    </lineage>
</organism>